<keyword id="KW-0963">Cytoplasm</keyword>
<keyword id="KW-0217">Developmental protein</keyword>
<keyword id="KW-1185">Reference proteome</keyword>
<gene>
    <name type="primary">TDRG1</name>
</gene>
<sequence length="100" mass="10472">MKRREAVCAHRHFLGTGKPPHPLGRSIPVEPCPGLPAFAEVDLLSLLVPIKISSTPPSGSRLDPQIASSAFPGLGSLGGQDSSGSLVQRASCELESPYEL</sequence>
<reference key="1">
    <citation type="journal article" date="2011" name="Tohoku J. Exp. Med.">
        <title>Characterization of a novel human testis-specific gene: testis developmental related gene 1 (TDRG1).</title>
        <authorList>
            <person name="Jiang X."/>
            <person name="Li D."/>
            <person name="Yang J."/>
            <person name="Wen J."/>
            <person name="Chen H."/>
            <person name="Xiao X."/>
            <person name="Dai Y."/>
            <person name="Yang J."/>
            <person name="Tang Y."/>
        </authorList>
    </citation>
    <scope>NUCLEOTIDE SEQUENCE [MRNA]</scope>
    <scope>TISSUE SPECIFICITY</scope>
    <scope>DEVELOPMENTAL STAGE</scope>
    <scope>SUBCELLULAR LOCATION</scope>
    <source>
        <tissue>Testis</tissue>
    </source>
</reference>
<reference key="2">
    <citation type="journal article" date="2003" name="Nature">
        <title>The DNA sequence and analysis of human chromosome 6.</title>
        <authorList>
            <person name="Mungall A.J."/>
            <person name="Palmer S.A."/>
            <person name="Sims S.K."/>
            <person name="Edwards C.A."/>
            <person name="Ashurst J.L."/>
            <person name="Wilming L."/>
            <person name="Jones M.C."/>
            <person name="Horton R."/>
            <person name="Hunt S.E."/>
            <person name="Scott C.E."/>
            <person name="Gilbert J.G.R."/>
            <person name="Clamp M.E."/>
            <person name="Bethel G."/>
            <person name="Milne S."/>
            <person name="Ainscough R."/>
            <person name="Almeida J.P."/>
            <person name="Ambrose K.D."/>
            <person name="Andrews T.D."/>
            <person name="Ashwell R.I.S."/>
            <person name="Babbage A.K."/>
            <person name="Bagguley C.L."/>
            <person name="Bailey J."/>
            <person name="Banerjee R."/>
            <person name="Barker D.J."/>
            <person name="Barlow K.F."/>
            <person name="Bates K."/>
            <person name="Beare D.M."/>
            <person name="Beasley H."/>
            <person name="Beasley O."/>
            <person name="Bird C.P."/>
            <person name="Blakey S.E."/>
            <person name="Bray-Allen S."/>
            <person name="Brook J."/>
            <person name="Brown A.J."/>
            <person name="Brown J.Y."/>
            <person name="Burford D.C."/>
            <person name="Burrill W."/>
            <person name="Burton J."/>
            <person name="Carder C."/>
            <person name="Carter N.P."/>
            <person name="Chapman J.C."/>
            <person name="Clark S.Y."/>
            <person name="Clark G."/>
            <person name="Clee C.M."/>
            <person name="Clegg S."/>
            <person name="Cobley V."/>
            <person name="Collier R.E."/>
            <person name="Collins J.E."/>
            <person name="Colman L.K."/>
            <person name="Corby N.R."/>
            <person name="Coville G.J."/>
            <person name="Culley K.M."/>
            <person name="Dhami P."/>
            <person name="Davies J."/>
            <person name="Dunn M."/>
            <person name="Earthrowl M.E."/>
            <person name="Ellington A.E."/>
            <person name="Evans K.A."/>
            <person name="Faulkner L."/>
            <person name="Francis M.D."/>
            <person name="Frankish A."/>
            <person name="Frankland J."/>
            <person name="French L."/>
            <person name="Garner P."/>
            <person name="Garnett J."/>
            <person name="Ghori M.J."/>
            <person name="Gilby L.M."/>
            <person name="Gillson C.J."/>
            <person name="Glithero R.J."/>
            <person name="Grafham D.V."/>
            <person name="Grant M."/>
            <person name="Gribble S."/>
            <person name="Griffiths C."/>
            <person name="Griffiths M.N.D."/>
            <person name="Hall R."/>
            <person name="Halls K.S."/>
            <person name="Hammond S."/>
            <person name="Harley J.L."/>
            <person name="Hart E.A."/>
            <person name="Heath P.D."/>
            <person name="Heathcott R."/>
            <person name="Holmes S.J."/>
            <person name="Howden P.J."/>
            <person name="Howe K.L."/>
            <person name="Howell G.R."/>
            <person name="Huckle E."/>
            <person name="Humphray S.J."/>
            <person name="Humphries M.D."/>
            <person name="Hunt A.R."/>
            <person name="Johnson C.M."/>
            <person name="Joy A.A."/>
            <person name="Kay M."/>
            <person name="Keenan S.J."/>
            <person name="Kimberley A.M."/>
            <person name="King A."/>
            <person name="Laird G.K."/>
            <person name="Langford C."/>
            <person name="Lawlor S."/>
            <person name="Leongamornlert D.A."/>
            <person name="Leversha M."/>
            <person name="Lloyd C.R."/>
            <person name="Lloyd D.M."/>
            <person name="Loveland J.E."/>
            <person name="Lovell J."/>
            <person name="Martin S."/>
            <person name="Mashreghi-Mohammadi M."/>
            <person name="Maslen G.L."/>
            <person name="Matthews L."/>
            <person name="McCann O.T."/>
            <person name="McLaren S.J."/>
            <person name="McLay K."/>
            <person name="McMurray A."/>
            <person name="Moore M.J.F."/>
            <person name="Mullikin J.C."/>
            <person name="Niblett D."/>
            <person name="Nickerson T."/>
            <person name="Novik K.L."/>
            <person name="Oliver K."/>
            <person name="Overton-Larty E.K."/>
            <person name="Parker A."/>
            <person name="Patel R."/>
            <person name="Pearce A.V."/>
            <person name="Peck A.I."/>
            <person name="Phillimore B.J.C.T."/>
            <person name="Phillips S."/>
            <person name="Plumb R.W."/>
            <person name="Porter K.M."/>
            <person name="Ramsey Y."/>
            <person name="Ranby S.A."/>
            <person name="Rice C.M."/>
            <person name="Ross M.T."/>
            <person name="Searle S.M."/>
            <person name="Sehra H.K."/>
            <person name="Sheridan E."/>
            <person name="Skuce C.D."/>
            <person name="Smith S."/>
            <person name="Smith M."/>
            <person name="Spraggon L."/>
            <person name="Squares S.L."/>
            <person name="Steward C.A."/>
            <person name="Sycamore N."/>
            <person name="Tamlyn-Hall G."/>
            <person name="Tester J."/>
            <person name="Theaker A.J."/>
            <person name="Thomas D.W."/>
            <person name="Thorpe A."/>
            <person name="Tracey A."/>
            <person name="Tromans A."/>
            <person name="Tubby B."/>
            <person name="Wall M."/>
            <person name="Wallis J.M."/>
            <person name="West A.P."/>
            <person name="White S.S."/>
            <person name="Whitehead S.L."/>
            <person name="Whittaker H."/>
            <person name="Wild A."/>
            <person name="Willey D.J."/>
            <person name="Wilmer T.E."/>
            <person name="Wood J.M."/>
            <person name="Wray P.W."/>
            <person name="Wyatt J.C."/>
            <person name="Young L."/>
            <person name="Younger R.M."/>
            <person name="Bentley D.R."/>
            <person name="Coulson A."/>
            <person name="Durbin R.M."/>
            <person name="Hubbard T."/>
            <person name="Sulston J.E."/>
            <person name="Dunham I."/>
            <person name="Rogers J."/>
            <person name="Beck S."/>
        </authorList>
    </citation>
    <scope>NUCLEOTIDE SEQUENCE [LARGE SCALE GENOMIC DNA]</scope>
</reference>
<reference key="3">
    <citation type="submission" date="2005-07" db="EMBL/GenBank/DDBJ databases">
        <authorList>
            <person name="Mural R.J."/>
            <person name="Istrail S."/>
            <person name="Sutton G.G."/>
            <person name="Florea L."/>
            <person name="Halpern A.L."/>
            <person name="Mobarry C.M."/>
            <person name="Lippert R."/>
            <person name="Walenz B."/>
            <person name="Shatkay H."/>
            <person name="Dew I."/>
            <person name="Miller J.R."/>
            <person name="Flanigan M.J."/>
            <person name="Edwards N.J."/>
            <person name="Bolanos R."/>
            <person name="Fasulo D."/>
            <person name="Halldorsson B.V."/>
            <person name="Hannenhalli S."/>
            <person name="Turner R."/>
            <person name="Yooseph S."/>
            <person name="Lu F."/>
            <person name="Nusskern D.R."/>
            <person name="Shue B.C."/>
            <person name="Zheng X.H."/>
            <person name="Zhong F."/>
            <person name="Delcher A.L."/>
            <person name="Huson D.H."/>
            <person name="Kravitz S.A."/>
            <person name="Mouchard L."/>
            <person name="Reinert K."/>
            <person name="Remington K.A."/>
            <person name="Clark A.G."/>
            <person name="Waterman M.S."/>
            <person name="Eichler E.E."/>
            <person name="Adams M.D."/>
            <person name="Hunkapiller M.W."/>
            <person name="Myers E.W."/>
            <person name="Venter J.C."/>
        </authorList>
    </citation>
    <scope>NUCLEOTIDE SEQUENCE [LARGE SCALE GENOMIC DNA]</scope>
</reference>
<accession>Q3Y452</accession>
<proteinExistence type="evidence at protein level"/>
<comment type="subcellular location">
    <subcellularLocation>
        <location evidence="2">Cytoplasm</location>
    </subcellularLocation>
</comment>
<comment type="tissue specificity">
    <text evidence="2">Expressed in the testis but not in any other non-reproductive tissues (at protein level). Mainly located in spermatogenic cells in seminiferous tubules of adult testis.</text>
</comment>
<comment type="developmental stage">
    <text evidence="2">Undetectable in the fetal testis, shows the highest expression level in post-puberty testis, with the expression levels decreasing afterwards with aging.</text>
</comment>
<feature type="chain" id="PRO_0000419617" description="Testis development-related protein 1">
    <location>
        <begin position="1"/>
        <end position="100"/>
    </location>
</feature>
<feature type="region of interest" description="Disordered" evidence="1">
    <location>
        <begin position="73"/>
        <end position="100"/>
    </location>
</feature>
<organism>
    <name type="scientific">Homo sapiens</name>
    <name type="common">Human</name>
    <dbReference type="NCBI Taxonomy" id="9606"/>
    <lineage>
        <taxon>Eukaryota</taxon>
        <taxon>Metazoa</taxon>
        <taxon>Chordata</taxon>
        <taxon>Craniata</taxon>
        <taxon>Vertebrata</taxon>
        <taxon>Euteleostomi</taxon>
        <taxon>Mammalia</taxon>
        <taxon>Eutheria</taxon>
        <taxon>Euarchontoglires</taxon>
        <taxon>Primates</taxon>
        <taxon>Haplorrhini</taxon>
        <taxon>Catarrhini</taxon>
        <taxon>Hominidae</taxon>
        <taxon>Homo</taxon>
    </lineage>
</organism>
<name>TDRG1_HUMAN</name>
<evidence type="ECO:0000256" key="1">
    <source>
        <dbReference type="SAM" id="MobiDB-lite"/>
    </source>
</evidence>
<evidence type="ECO:0000269" key="2">
    <source>
    </source>
</evidence>
<dbReference type="EMBL" id="DQ168992">
    <property type="protein sequence ID" value="AAZ82017.1"/>
    <property type="molecule type" value="mRNA"/>
</dbReference>
<dbReference type="EMBL" id="AL591063">
    <property type="status" value="NOT_ANNOTATED_CDS"/>
    <property type="molecule type" value="Genomic_DNA"/>
</dbReference>
<dbReference type="EMBL" id="CH471081">
    <property type="protein sequence ID" value="EAX04005.1"/>
    <property type="molecule type" value="Genomic_DNA"/>
</dbReference>
<dbReference type="BioMuta" id="TDRG1"/>
<dbReference type="AGR" id="HGNC:43642"/>
<dbReference type="GeneCards" id="TDRG1"/>
<dbReference type="neXtProt" id="NX_Q3Y452"/>
<dbReference type="InParanoid" id="Q3Y452"/>
<dbReference type="PAN-GO" id="Q3Y452">
    <property type="GO annotations" value="0 GO annotations based on evolutionary models"/>
</dbReference>
<dbReference type="ChiTaRS" id="TDRG1">
    <property type="organism name" value="human"/>
</dbReference>
<dbReference type="Pharos" id="Q3Y452">
    <property type="development level" value="Tdark"/>
</dbReference>
<dbReference type="Proteomes" id="UP000005640">
    <property type="component" value="Unplaced"/>
</dbReference>
<dbReference type="RNAct" id="Q3Y452">
    <property type="molecule type" value="protein"/>
</dbReference>
<dbReference type="GO" id="GO:0005737">
    <property type="term" value="C:cytoplasm"/>
    <property type="evidence" value="ECO:0007669"/>
    <property type="project" value="UniProtKB-SubCell"/>
</dbReference>
<protein>
    <recommendedName>
        <fullName>Testis development-related protein 1</fullName>
    </recommendedName>
</protein>